<comment type="function">
    <text evidence="1">Required for the post-translational delivery of tail-anchored (TA) proteins to the endoplasmic reticulum. Acts as a membrane receptor for soluble GET3, which recognizes and selectively binds the transmembrane domain of TA proteins in the cytosol.</text>
</comment>
<comment type="subunit">
    <text evidence="1">Interacts with GET3.</text>
</comment>
<comment type="subcellular location">
    <subcellularLocation>
        <location evidence="1">Endoplasmic reticulum membrane</location>
        <topology evidence="1">Multi-pass membrane protein</topology>
    </subcellularLocation>
</comment>
<comment type="similarity">
    <text evidence="1">Belongs to the WRB/GET1 family.</text>
</comment>
<evidence type="ECO:0000255" key="1">
    <source>
        <dbReference type="HAMAP-Rule" id="MF_03113"/>
    </source>
</evidence>
<protein>
    <recommendedName>
        <fullName evidence="1">Protein GET1</fullName>
    </recommendedName>
    <alternativeName>
        <fullName evidence="1">Guided entry of tail-anchored proteins 1</fullName>
    </alternativeName>
</protein>
<feature type="chain" id="PRO_0000388570" description="Protein GET1">
    <location>
        <begin position="1"/>
        <end position="206"/>
    </location>
</feature>
<feature type="topological domain" description="Lumenal" evidence="1">
    <location>
        <begin position="1"/>
        <end position="4"/>
    </location>
</feature>
<feature type="transmembrane region" description="Helical" evidence="1">
    <location>
        <begin position="5"/>
        <end position="24"/>
    </location>
</feature>
<feature type="topological domain" description="Cytoplasmic" evidence="1">
    <location>
        <begin position="25"/>
        <end position="110"/>
    </location>
</feature>
<feature type="transmembrane region" description="Helical" evidence="1">
    <location>
        <begin position="111"/>
        <end position="131"/>
    </location>
</feature>
<feature type="topological domain" description="Lumenal" evidence="1">
    <location>
        <begin position="132"/>
        <end position="155"/>
    </location>
</feature>
<feature type="transmembrane region" description="Helical" evidence="1">
    <location>
        <begin position="156"/>
        <end position="172"/>
    </location>
</feature>
<feature type="topological domain" description="Cytoplasmic" evidence="1">
    <location>
        <begin position="173"/>
        <end position="206"/>
    </location>
</feature>
<feature type="coiled-coil region" evidence="1">
    <location>
        <begin position="75"/>
        <end position="100"/>
    </location>
</feature>
<name>GET1_AJECH</name>
<keyword id="KW-0175">Coiled coil</keyword>
<keyword id="KW-0256">Endoplasmic reticulum</keyword>
<keyword id="KW-0472">Membrane</keyword>
<keyword id="KW-1185">Reference proteome</keyword>
<keyword id="KW-0812">Transmembrane</keyword>
<keyword id="KW-1133">Transmembrane helix</keyword>
<keyword id="KW-0813">Transport</keyword>
<reference key="1">
    <citation type="submission" date="2009-05" db="EMBL/GenBank/DDBJ databases">
        <title>The genome sequence of Ajellomyces capsulatus strain H143.</title>
        <authorList>
            <person name="Champion M."/>
            <person name="Cuomo C.A."/>
            <person name="Ma L.-J."/>
            <person name="Henn M.R."/>
            <person name="Sil A."/>
            <person name="Goldman B."/>
            <person name="Young S.K."/>
            <person name="Kodira C.D."/>
            <person name="Zeng Q."/>
            <person name="Koehrsen M."/>
            <person name="Alvarado L."/>
            <person name="Berlin A.M."/>
            <person name="Borenstein D."/>
            <person name="Chen Z."/>
            <person name="Engels R."/>
            <person name="Freedman E."/>
            <person name="Gellesch M."/>
            <person name="Goldberg J."/>
            <person name="Griggs A."/>
            <person name="Gujja S."/>
            <person name="Heiman D.I."/>
            <person name="Hepburn T.A."/>
            <person name="Howarth C."/>
            <person name="Jen D."/>
            <person name="Larson L."/>
            <person name="Lewis B."/>
            <person name="Mehta T."/>
            <person name="Park D."/>
            <person name="Pearson M."/>
            <person name="Roberts A."/>
            <person name="Saif S."/>
            <person name="Shea T.D."/>
            <person name="Shenoy N."/>
            <person name="Sisk P."/>
            <person name="Stolte C."/>
            <person name="Sykes S."/>
            <person name="Walk T."/>
            <person name="White J."/>
            <person name="Yandava C."/>
            <person name="Klein B."/>
            <person name="McEwen J.G."/>
            <person name="Puccia R."/>
            <person name="Goldman G.H."/>
            <person name="Felipe M.S."/>
            <person name="Nino-Vega G."/>
            <person name="San-Blas G."/>
            <person name="Taylor J.W."/>
            <person name="Mendoza L."/>
            <person name="Galagan J.E."/>
            <person name="Nusbaum C."/>
            <person name="Birren B.W."/>
        </authorList>
    </citation>
    <scope>NUCLEOTIDE SEQUENCE [LARGE SCALE GENOMIC DNA]</scope>
    <source>
        <strain>H143</strain>
    </source>
</reference>
<dbReference type="EMBL" id="GG692420">
    <property type="protein sequence ID" value="EER43491.1"/>
    <property type="molecule type" value="Genomic_DNA"/>
</dbReference>
<dbReference type="SMR" id="C6H7W0"/>
<dbReference type="STRING" id="544712.C6H7W0"/>
<dbReference type="VEuPathDB" id="FungiDB:HCDG_01521"/>
<dbReference type="eggNOG" id="KOG4253">
    <property type="taxonomic scope" value="Eukaryota"/>
</dbReference>
<dbReference type="HOGENOM" id="CLU_089418_1_0_1"/>
<dbReference type="OMA" id="AEWIISF"/>
<dbReference type="OrthoDB" id="1588at299071"/>
<dbReference type="Proteomes" id="UP000002624">
    <property type="component" value="Unassembled WGS sequence"/>
</dbReference>
<dbReference type="GO" id="GO:0005789">
    <property type="term" value="C:endoplasmic reticulum membrane"/>
    <property type="evidence" value="ECO:0007669"/>
    <property type="project" value="UniProtKB-SubCell"/>
</dbReference>
<dbReference type="GO" id="GO:0043529">
    <property type="term" value="C:GET complex"/>
    <property type="evidence" value="ECO:0007669"/>
    <property type="project" value="InterPro"/>
</dbReference>
<dbReference type="GO" id="GO:0043495">
    <property type="term" value="F:protein-membrane adaptor activity"/>
    <property type="evidence" value="ECO:0007669"/>
    <property type="project" value="TreeGrafter"/>
</dbReference>
<dbReference type="GO" id="GO:0071816">
    <property type="term" value="P:tail-anchored membrane protein insertion into ER membrane"/>
    <property type="evidence" value="ECO:0007669"/>
    <property type="project" value="InterPro"/>
</dbReference>
<dbReference type="FunFam" id="1.10.287.660:FF:000006">
    <property type="entry name" value="Protein GET1"/>
    <property type="match status" value="1"/>
</dbReference>
<dbReference type="Gene3D" id="1.10.287.660">
    <property type="entry name" value="Helix hairpin bin"/>
    <property type="match status" value="1"/>
</dbReference>
<dbReference type="HAMAP" id="MF_03113">
    <property type="entry name" value="Get1"/>
    <property type="match status" value="1"/>
</dbReference>
<dbReference type="InterPro" id="IPR028945">
    <property type="entry name" value="Get1"/>
</dbReference>
<dbReference type="InterPro" id="IPR027538">
    <property type="entry name" value="Get1_fungi"/>
</dbReference>
<dbReference type="InterPro" id="IPR029012">
    <property type="entry name" value="Helix_hairpin_bin_sf"/>
</dbReference>
<dbReference type="PANTHER" id="PTHR42650:SF1">
    <property type="entry name" value="GUIDED ENTRY OF TAIL-ANCHORED PROTEINS FACTOR 1"/>
    <property type="match status" value="1"/>
</dbReference>
<dbReference type="PANTHER" id="PTHR42650">
    <property type="entry name" value="TAIL-ANCHORED PROTEIN INSERTION RECEPTOR WRB"/>
    <property type="match status" value="1"/>
</dbReference>
<dbReference type="Pfam" id="PF04420">
    <property type="entry name" value="CHD5"/>
    <property type="match status" value="1"/>
</dbReference>
<gene>
    <name evidence="1" type="primary">GET1</name>
    <name type="ORF">HCDG_01521</name>
</gene>
<organism>
    <name type="scientific">Ajellomyces capsulatus (strain H143)</name>
    <name type="common">Darling's disease fungus</name>
    <name type="synonym">Histoplasma capsulatum</name>
    <dbReference type="NCBI Taxonomy" id="544712"/>
    <lineage>
        <taxon>Eukaryota</taxon>
        <taxon>Fungi</taxon>
        <taxon>Dikarya</taxon>
        <taxon>Ascomycota</taxon>
        <taxon>Pezizomycotina</taxon>
        <taxon>Eurotiomycetes</taxon>
        <taxon>Eurotiomycetidae</taxon>
        <taxon>Onygenales</taxon>
        <taxon>Ajellomycetaceae</taxon>
        <taxon>Histoplasma</taxon>
    </lineage>
</organism>
<proteinExistence type="inferred from homology"/>
<sequence length="206" mass="23226">MPSLLITALFLNVIIYVINTVGAATVDGLLWLLYIQLPTGTSQIAREQRHMKREVVQLKHEMSSTSSQDEFAKWAKLRRRHDKALEAYEAKNNELTQSKSTFDITIKIARWAATSGLMLFLQFWYSKTPIFTLPPGWIPWQVQWVLSFPRAPMGTVSIQIWSGACATVVALVGDAMKASLAYVSKPKIDRIKLGATMEGKEGKKRQ</sequence>
<accession>C6H7W0</accession>